<keyword id="KW-1185">Reference proteome</keyword>
<keyword id="KW-0687">Ribonucleoprotein</keyword>
<keyword id="KW-0689">Ribosomal protein</keyword>
<keyword id="KW-0694">RNA-binding</keyword>
<keyword id="KW-0699">rRNA-binding</keyword>
<keyword id="KW-0820">tRNA-binding</keyword>
<dbReference type="EMBL" id="CP000423">
    <property type="protein sequence ID" value="ABJ71215.1"/>
    <property type="molecule type" value="Genomic_DNA"/>
</dbReference>
<dbReference type="RefSeq" id="WP_003567516.1">
    <property type="nucleotide sequence ID" value="NC_008526.1"/>
</dbReference>
<dbReference type="RefSeq" id="YP_807657.1">
    <property type="nucleotide sequence ID" value="NC_008526.1"/>
</dbReference>
<dbReference type="SMR" id="Q035A7"/>
<dbReference type="STRING" id="321967.LSEI_2479"/>
<dbReference type="PaxDb" id="321967-LSEI_2479"/>
<dbReference type="GeneID" id="57091060"/>
<dbReference type="KEGG" id="lca:LSEI_2479"/>
<dbReference type="PATRIC" id="fig|321967.11.peg.2433"/>
<dbReference type="HOGENOM" id="CLU_103849_1_1_9"/>
<dbReference type="Proteomes" id="UP000001651">
    <property type="component" value="Chromosome"/>
</dbReference>
<dbReference type="GO" id="GO:0005829">
    <property type="term" value="C:cytosol"/>
    <property type="evidence" value="ECO:0007669"/>
    <property type="project" value="TreeGrafter"/>
</dbReference>
<dbReference type="GO" id="GO:0015935">
    <property type="term" value="C:small ribosomal subunit"/>
    <property type="evidence" value="ECO:0007669"/>
    <property type="project" value="TreeGrafter"/>
</dbReference>
<dbReference type="GO" id="GO:0019843">
    <property type="term" value="F:rRNA binding"/>
    <property type="evidence" value="ECO:0007669"/>
    <property type="project" value="UniProtKB-UniRule"/>
</dbReference>
<dbReference type="GO" id="GO:0003735">
    <property type="term" value="F:structural constituent of ribosome"/>
    <property type="evidence" value="ECO:0007669"/>
    <property type="project" value="InterPro"/>
</dbReference>
<dbReference type="GO" id="GO:0000049">
    <property type="term" value="F:tRNA binding"/>
    <property type="evidence" value="ECO:0007669"/>
    <property type="project" value="UniProtKB-UniRule"/>
</dbReference>
<dbReference type="GO" id="GO:0006412">
    <property type="term" value="P:translation"/>
    <property type="evidence" value="ECO:0007669"/>
    <property type="project" value="UniProtKB-UniRule"/>
</dbReference>
<dbReference type="FunFam" id="1.10.8.50:FF:000001">
    <property type="entry name" value="30S ribosomal protein S13"/>
    <property type="match status" value="1"/>
</dbReference>
<dbReference type="FunFam" id="4.10.910.10:FF:000001">
    <property type="entry name" value="30S ribosomal protein S13"/>
    <property type="match status" value="1"/>
</dbReference>
<dbReference type="Gene3D" id="1.10.8.50">
    <property type="match status" value="1"/>
</dbReference>
<dbReference type="Gene3D" id="4.10.910.10">
    <property type="entry name" value="30s ribosomal protein s13, domain 2"/>
    <property type="match status" value="1"/>
</dbReference>
<dbReference type="HAMAP" id="MF_01315">
    <property type="entry name" value="Ribosomal_uS13"/>
    <property type="match status" value="1"/>
</dbReference>
<dbReference type="InterPro" id="IPR027437">
    <property type="entry name" value="Rbsml_uS13_C"/>
</dbReference>
<dbReference type="InterPro" id="IPR001892">
    <property type="entry name" value="Ribosomal_uS13"/>
</dbReference>
<dbReference type="InterPro" id="IPR010979">
    <property type="entry name" value="Ribosomal_uS13-like_H2TH"/>
</dbReference>
<dbReference type="InterPro" id="IPR019980">
    <property type="entry name" value="Ribosomal_uS13_bac-type"/>
</dbReference>
<dbReference type="InterPro" id="IPR018269">
    <property type="entry name" value="Ribosomal_uS13_CS"/>
</dbReference>
<dbReference type="NCBIfam" id="TIGR03631">
    <property type="entry name" value="uS13_bact"/>
    <property type="match status" value="1"/>
</dbReference>
<dbReference type="PANTHER" id="PTHR10871">
    <property type="entry name" value="30S RIBOSOMAL PROTEIN S13/40S RIBOSOMAL PROTEIN S18"/>
    <property type="match status" value="1"/>
</dbReference>
<dbReference type="PANTHER" id="PTHR10871:SF1">
    <property type="entry name" value="SMALL RIBOSOMAL SUBUNIT PROTEIN US13M"/>
    <property type="match status" value="1"/>
</dbReference>
<dbReference type="Pfam" id="PF00416">
    <property type="entry name" value="Ribosomal_S13"/>
    <property type="match status" value="1"/>
</dbReference>
<dbReference type="PIRSF" id="PIRSF002134">
    <property type="entry name" value="Ribosomal_S13"/>
    <property type="match status" value="1"/>
</dbReference>
<dbReference type="SUPFAM" id="SSF46946">
    <property type="entry name" value="S13-like H2TH domain"/>
    <property type="match status" value="1"/>
</dbReference>
<dbReference type="PROSITE" id="PS00646">
    <property type="entry name" value="RIBOSOMAL_S13_1"/>
    <property type="match status" value="1"/>
</dbReference>
<dbReference type="PROSITE" id="PS50159">
    <property type="entry name" value="RIBOSOMAL_S13_2"/>
    <property type="match status" value="1"/>
</dbReference>
<sequence>MARIAGVDLPRGKQIVIALTYIYGVGKTTAQKVLKNAGVPENVRQDDLTPEQEDKIRAALDSVKVEGDLRREVNLNIKRLMEIGSYRGIRHRRGLPVRGQNTKNNARTRKGKKASMAGKKK</sequence>
<proteinExistence type="inferred from homology"/>
<reference key="1">
    <citation type="journal article" date="2006" name="Proc. Natl. Acad. Sci. U.S.A.">
        <title>Comparative genomics of the lactic acid bacteria.</title>
        <authorList>
            <person name="Makarova K.S."/>
            <person name="Slesarev A."/>
            <person name="Wolf Y.I."/>
            <person name="Sorokin A."/>
            <person name="Mirkin B."/>
            <person name="Koonin E.V."/>
            <person name="Pavlov A."/>
            <person name="Pavlova N."/>
            <person name="Karamychev V."/>
            <person name="Polouchine N."/>
            <person name="Shakhova V."/>
            <person name="Grigoriev I."/>
            <person name="Lou Y."/>
            <person name="Rohksar D."/>
            <person name="Lucas S."/>
            <person name="Huang K."/>
            <person name="Goodstein D.M."/>
            <person name="Hawkins T."/>
            <person name="Plengvidhya V."/>
            <person name="Welker D."/>
            <person name="Hughes J."/>
            <person name="Goh Y."/>
            <person name="Benson A."/>
            <person name="Baldwin K."/>
            <person name="Lee J.-H."/>
            <person name="Diaz-Muniz I."/>
            <person name="Dosti B."/>
            <person name="Smeianov V."/>
            <person name="Wechter W."/>
            <person name="Barabote R."/>
            <person name="Lorca G."/>
            <person name="Altermann E."/>
            <person name="Barrangou R."/>
            <person name="Ganesan B."/>
            <person name="Xie Y."/>
            <person name="Rawsthorne H."/>
            <person name="Tamir D."/>
            <person name="Parker C."/>
            <person name="Breidt F."/>
            <person name="Broadbent J.R."/>
            <person name="Hutkins R."/>
            <person name="O'Sullivan D."/>
            <person name="Steele J."/>
            <person name="Unlu G."/>
            <person name="Saier M.H. Jr."/>
            <person name="Klaenhammer T."/>
            <person name="Richardson P."/>
            <person name="Kozyavkin S."/>
            <person name="Weimer B.C."/>
            <person name="Mills D.A."/>
        </authorList>
    </citation>
    <scope>NUCLEOTIDE SEQUENCE [LARGE SCALE GENOMIC DNA]</scope>
    <source>
        <strain>ATCC 334 / BCRC 17002 / CCUG 31169 / CIP 107868 / KCTC 3260 / NRRL B-441</strain>
    </source>
</reference>
<name>RS13_LACP3</name>
<feature type="chain" id="PRO_0000306626" description="Small ribosomal subunit protein uS13">
    <location>
        <begin position="1"/>
        <end position="121"/>
    </location>
</feature>
<feature type="region of interest" description="Disordered" evidence="2">
    <location>
        <begin position="91"/>
        <end position="121"/>
    </location>
</feature>
<feature type="compositionally biased region" description="Basic residues" evidence="2">
    <location>
        <begin position="106"/>
        <end position="121"/>
    </location>
</feature>
<protein>
    <recommendedName>
        <fullName evidence="1">Small ribosomal subunit protein uS13</fullName>
    </recommendedName>
    <alternativeName>
        <fullName evidence="3">30S ribosomal protein S13</fullName>
    </alternativeName>
</protein>
<comment type="function">
    <text evidence="1">Located at the top of the head of the 30S subunit, it contacts several helices of the 16S rRNA. In the 70S ribosome it contacts the 23S rRNA (bridge B1a) and protein L5 of the 50S subunit (bridge B1b), connecting the 2 subunits; these bridges are implicated in subunit movement. Contacts the tRNAs in the A and P-sites.</text>
</comment>
<comment type="subunit">
    <text evidence="1">Part of the 30S ribosomal subunit. Forms a loose heterodimer with protein S19. Forms two bridges to the 50S subunit in the 70S ribosome.</text>
</comment>
<comment type="similarity">
    <text evidence="1">Belongs to the universal ribosomal protein uS13 family.</text>
</comment>
<organism>
    <name type="scientific">Lacticaseibacillus paracasei (strain ATCC 334 / BCRC 17002 / CCUG 31169 / CIP 107868 / KCTC 3260 / NRRL B-441)</name>
    <name type="common">Lactobacillus paracasei</name>
    <dbReference type="NCBI Taxonomy" id="321967"/>
    <lineage>
        <taxon>Bacteria</taxon>
        <taxon>Bacillati</taxon>
        <taxon>Bacillota</taxon>
        <taxon>Bacilli</taxon>
        <taxon>Lactobacillales</taxon>
        <taxon>Lactobacillaceae</taxon>
        <taxon>Lacticaseibacillus</taxon>
    </lineage>
</organism>
<gene>
    <name evidence="1" type="primary">rpsM</name>
    <name type="ordered locus">LSEI_2479</name>
</gene>
<evidence type="ECO:0000255" key="1">
    <source>
        <dbReference type="HAMAP-Rule" id="MF_01315"/>
    </source>
</evidence>
<evidence type="ECO:0000256" key="2">
    <source>
        <dbReference type="SAM" id="MobiDB-lite"/>
    </source>
</evidence>
<evidence type="ECO:0000305" key="3"/>
<accession>Q035A7</accession>